<dbReference type="EC" id="2.3.1.275" evidence="1"/>
<dbReference type="EMBL" id="CP001108">
    <property type="protein sequence ID" value="ACF47177.1"/>
    <property type="molecule type" value="Genomic_DNA"/>
</dbReference>
<dbReference type="RefSeq" id="WP_012506708.1">
    <property type="nucleotide sequence ID" value="NC_011059.1"/>
</dbReference>
<dbReference type="SMR" id="B4S675"/>
<dbReference type="STRING" id="290512.Paes_2175"/>
<dbReference type="KEGG" id="paa:Paes_2175"/>
<dbReference type="eggNOG" id="COG0344">
    <property type="taxonomic scope" value="Bacteria"/>
</dbReference>
<dbReference type="HOGENOM" id="CLU_081254_3_0_10"/>
<dbReference type="UniPathway" id="UPA00085"/>
<dbReference type="Proteomes" id="UP000002725">
    <property type="component" value="Chromosome"/>
</dbReference>
<dbReference type="GO" id="GO:0005886">
    <property type="term" value="C:plasma membrane"/>
    <property type="evidence" value="ECO:0007669"/>
    <property type="project" value="UniProtKB-SubCell"/>
</dbReference>
<dbReference type="GO" id="GO:0043772">
    <property type="term" value="F:acyl-phosphate glycerol-3-phosphate acyltransferase activity"/>
    <property type="evidence" value="ECO:0007669"/>
    <property type="project" value="UniProtKB-UniRule"/>
</dbReference>
<dbReference type="GO" id="GO:0008654">
    <property type="term" value="P:phospholipid biosynthetic process"/>
    <property type="evidence" value="ECO:0007669"/>
    <property type="project" value="UniProtKB-UniRule"/>
</dbReference>
<dbReference type="HAMAP" id="MF_01043">
    <property type="entry name" value="PlsY"/>
    <property type="match status" value="1"/>
</dbReference>
<dbReference type="InterPro" id="IPR003811">
    <property type="entry name" value="G3P_acylTferase_PlsY"/>
</dbReference>
<dbReference type="NCBIfam" id="TIGR00023">
    <property type="entry name" value="glycerol-3-phosphate 1-O-acyltransferase PlsY"/>
    <property type="match status" value="1"/>
</dbReference>
<dbReference type="PANTHER" id="PTHR30309:SF0">
    <property type="entry name" value="GLYCEROL-3-PHOSPHATE ACYLTRANSFERASE-RELATED"/>
    <property type="match status" value="1"/>
</dbReference>
<dbReference type="PANTHER" id="PTHR30309">
    <property type="entry name" value="INNER MEMBRANE PROTEIN YGIH"/>
    <property type="match status" value="1"/>
</dbReference>
<dbReference type="Pfam" id="PF02660">
    <property type="entry name" value="G3P_acyltransf"/>
    <property type="match status" value="1"/>
</dbReference>
<dbReference type="SMART" id="SM01207">
    <property type="entry name" value="G3P_acyltransf"/>
    <property type="match status" value="1"/>
</dbReference>
<feature type="chain" id="PRO_1000136106" description="Glycerol-3-phosphate acyltransferase">
    <location>
        <begin position="1"/>
        <end position="235"/>
    </location>
</feature>
<feature type="transmembrane region" description="Helical" evidence="1">
    <location>
        <begin position="4"/>
        <end position="24"/>
    </location>
</feature>
<feature type="transmembrane region" description="Helical" evidence="1">
    <location>
        <begin position="56"/>
        <end position="76"/>
    </location>
</feature>
<feature type="transmembrane region" description="Helical" evidence="1">
    <location>
        <begin position="90"/>
        <end position="110"/>
    </location>
</feature>
<feature type="transmembrane region" description="Helical" evidence="1">
    <location>
        <begin position="126"/>
        <end position="146"/>
    </location>
</feature>
<feature type="transmembrane region" description="Helical" evidence="1">
    <location>
        <begin position="152"/>
        <end position="172"/>
    </location>
</feature>
<feature type="transmembrane region" description="Helical" evidence="1">
    <location>
        <begin position="191"/>
        <end position="211"/>
    </location>
</feature>
<reference key="1">
    <citation type="submission" date="2008-06" db="EMBL/GenBank/DDBJ databases">
        <title>Complete sequence of chromosome of Prosthecochloris aestuarii DSM 271.</title>
        <authorList>
            <consortium name="US DOE Joint Genome Institute"/>
            <person name="Lucas S."/>
            <person name="Copeland A."/>
            <person name="Lapidus A."/>
            <person name="Glavina del Rio T."/>
            <person name="Dalin E."/>
            <person name="Tice H."/>
            <person name="Bruce D."/>
            <person name="Goodwin L."/>
            <person name="Pitluck S."/>
            <person name="Schmutz J."/>
            <person name="Larimer F."/>
            <person name="Land M."/>
            <person name="Hauser L."/>
            <person name="Kyrpides N."/>
            <person name="Anderson I."/>
            <person name="Liu Z."/>
            <person name="Li T."/>
            <person name="Zhao F."/>
            <person name="Overmann J."/>
            <person name="Bryant D.A."/>
            <person name="Richardson P."/>
        </authorList>
    </citation>
    <scope>NUCLEOTIDE SEQUENCE [LARGE SCALE GENOMIC DNA]</scope>
    <source>
        <strain>DSM 271 / SK 413</strain>
    </source>
</reference>
<sequence>MLTLIVILAVSYLIGSIPTSIIAGKLLRGIDVRDYGSGNAGGTNAFRVLGWKAGLAVTLLDIVKGAVAAISVVVFFEAHPLGAMPDINPVALRLIAGLAAVFGHVFTVFAGFRGGKGVSTAAGMMFGIAPVSTLIVLAVFLLTIFVSRYVSVASIIAAIAFPLVILVRKYLFDLGEGLDYYIRMFNGHVFIHDSLDFHLLIFGMIVAFAIIYTHRANIGRLLSGNENRVTFGRHA</sequence>
<protein>
    <recommendedName>
        <fullName evidence="1">Glycerol-3-phosphate acyltransferase</fullName>
    </recommendedName>
    <alternativeName>
        <fullName evidence="1">Acyl-PO4 G3P acyltransferase</fullName>
    </alternativeName>
    <alternativeName>
        <fullName evidence="1">Acyl-phosphate--glycerol-3-phosphate acyltransferase</fullName>
    </alternativeName>
    <alternativeName>
        <fullName evidence="1">G3P acyltransferase</fullName>
        <shortName evidence="1">GPAT</shortName>
        <ecNumber evidence="1">2.3.1.275</ecNumber>
    </alternativeName>
    <alternativeName>
        <fullName evidence="1">Lysophosphatidic acid synthase</fullName>
        <shortName evidence="1">LPA synthase</shortName>
    </alternativeName>
</protein>
<organism>
    <name type="scientific">Prosthecochloris aestuarii (strain DSM 271 / SK 413)</name>
    <dbReference type="NCBI Taxonomy" id="290512"/>
    <lineage>
        <taxon>Bacteria</taxon>
        <taxon>Pseudomonadati</taxon>
        <taxon>Chlorobiota</taxon>
        <taxon>Chlorobiia</taxon>
        <taxon>Chlorobiales</taxon>
        <taxon>Chlorobiaceae</taxon>
        <taxon>Prosthecochloris</taxon>
    </lineage>
</organism>
<gene>
    <name evidence="1" type="primary">plsY</name>
    <name type="ordered locus">Paes_2175</name>
</gene>
<name>PLSY_PROA2</name>
<keyword id="KW-0997">Cell inner membrane</keyword>
<keyword id="KW-1003">Cell membrane</keyword>
<keyword id="KW-0444">Lipid biosynthesis</keyword>
<keyword id="KW-0443">Lipid metabolism</keyword>
<keyword id="KW-0472">Membrane</keyword>
<keyword id="KW-0594">Phospholipid biosynthesis</keyword>
<keyword id="KW-1208">Phospholipid metabolism</keyword>
<keyword id="KW-0808">Transferase</keyword>
<keyword id="KW-0812">Transmembrane</keyword>
<keyword id="KW-1133">Transmembrane helix</keyword>
<accession>B4S675</accession>
<comment type="function">
    <text evidence="1">Catalyzes the transfer of an acyl group from acyl-phosphate (acyl-PO(4)) to glycerol-3-phosphate (G3P) to form lysophosphatidic acid (LPA). This enzyme utilizes acyl-phosphate as fatty acyl donor, but not acyl-CoA or acyl-ACP.</text>
</comment>
<comment type="catalytic activity">
    <reaction evidence="1">
        <text>an acyl phosphate + sn-glycerol 3-phosphate = a 1-acyl-sn-glycero-3-phosphate + phosphate</text>
        <dbReference type="Rhea" id="RHEA:34075"/>
        <dbReference type="ChEBI" id="CHEBI:43474"/>
        <dbReference type="ChEBI" id="CHEBI:57597"/>
        <dbReference type="ChEBI" id="CHEBI:57970"/>
        <dbReference type="ChEBI" id="CHEBI:59918"/>
        <dbReference type="EC" id="2.3.1.275"/>
    </reaction>
</comment>
<comment type="pathway">
    <text evidence="1">Lipid metabolism; phospholipid metabolism.</text>
</comment>
<comment type="subunit">
    <text evidence="1">Probably interacts with PlsX.</text>
</comment>
<comment type="subcellular location">
    <subcellularLocation>
        <location evidence="1">Cell inner membrane</location>
        <topology evidence="1">Multi-pass membrane protein</topology>
    </subcellularLocation>
</comment>
<comment type="similarity">
    <text evidence="1">Belongs to the PlsY family.</text>
</comment>
<proteinExistence type="inferred from homology"/>
<evidence type="ECO:0000255" key="1">
    <source>
        <dbReference type="HAMAP-Rule" id="MF_01043"/>
    </source>
</evidence>